<reference key="1">
    <citation type="journal article" date="2011" name="J. Bacteriol.">
        <title>Comparative genomics of 28 Salmonella enterica isolates: evidence for CRISPR-mediated adaptive sublineage evolution.</title>
        <authorList>
            <person name="Fricke W.F."/>
            <person name="Mammel M.K."/>
            <person name="McDermott P.F."/>
            <person name="Tartera C."/>
            <person name="White D.G."/>
            <person name="Leclerc J.E."/>
            <person name="Ravel J."/>
            <person name="Cebula T.A."/>
        </authorList>
    </citation>
    <scope>NUCLEOTIDE SEQUENCE [LARGE SCALE GENOMIC DNA]</scope>
    <source>
        <strain>SL254</strain>
    </source>
</reference>
<dbReference type="EC" id="5.4.99.62" evidence="1"/>
<dbReference type="EMBL" id="CP001113">
    <property type="protein sequence ID" value="ACF61823.1"/>
    <property type="molecule type" value="Genomic_DNA"/>
</dbReference>
<dbReference type="RefSeq" id="WP_000715944.1">
    <property type="nucleotide sequence ID" value="NZ_CCMR01000001.1"/>
</dbReference>
<dbReference type="SMR" id="B4SYE9"/>
<dbReference type="KEGG" id="see:SNSL254_A4164"/>
<dbReference type="HOGENOM" id="CLU_135498_0_0_6"/>
<dbReference type="UniPathway" id="UPA00916">
    <property type="reaction ID" value="UER00888"/>
</dbReference>
<dbReference type="Proteomes" id="UP000008824">
    <property type="component" value="Chromosome"/>
</dbReference>
<dbReference type="GO" id="GO:0005829">
    <property type="term" value="C:cytosol"/>
    <property type="evidence" value="ECO:0007669"/>
    <property type="project" value="TreeGrafter"/>
</dbReference>
<dbReference type="GO" id="GO:0062193">
    <property type="term" value="F:D-ribose pyranase activity"/>
    <property type="evidence" value="ECO:0007669"/>
    <property type="project" value="UniProtKB-EC"/>
</dbReference>
<dbReference type="GO" id="GO:0016872">
    <property type="term" value="F:intramolecular lyase activity"/>
    <property type="evidence" value="ECO:0007669"/>
    <property type="project" value="UniProtKB-UniRule"/>
</dbReference>
<dbReference type="GO" id="GO:0048029">
    <property type="term" value="F:monosaccharide binding"/>
    <property type="evidence" value="ECO:0007669"/>
    <property type="project" value="InterPro"/>
</dbReference>
<dbReference type="GO" id="GO:0019303">
    <property type="term" value="P:D-ribose catabolic process"/>
    <property type="evidence" value="ECO:0007669"/>
    <property type="project" value="UniProtKB-UniRule"/>
</dbReference>
<dbReference type="FunFam" id="3.40.1650.10:FF:000002">
    <property type="entry name" value="D-ribose pyranase"/>
    <property type="match status" value="1"/>
</dbReference>
<dbReference type="Gene3D" id="3.40.1650.10">
    <property type="entry name" value="RbsD-like domain"/>
    <property type="match status" value="1"/>
</dbReference>
<dbReference type="HAMAP" id="MF_01661">
    <property type="entry name" value="D_rib_pyranase"/>
    <property type="match status" value="1"/>
</dbReference>
<dbReference type="InterPro" id="IPR023064">
    <property type="entry name" value="D-ribose_pyranase"/>
</dbReference>
<dbReference type="InterPro" id="IPR023750">
    <property type="entry name" value="RbsD-like_sf"/>
</dbReference>
<dbReference type="InterPro" id="IPR007721">
    <property type="entry name" value="RbsD_FucU"/>
</dbReference>
<dbReference type="NCBIfam" id="NF008761">
    <property type="entry name" value="PRK11797.1"/>
    <property type="match status" value="1"/>
</dbReference>
<dbReference type="PANTHER" id="PTHR37831">
    <property type="entry name" value="D-RIBOSE PYRANASE"/>
    <property type="match status" value="1"/>
</dbReference>
<dbReference type="PANTHER" id="PTHR37831:SF1">
    <property type="entry name" value="D-RIBOSE PYRANASE"/>
    <property type="match status" value="1"/>
</dbReference>
<dbReference type="Pfam" id="PF05025">
    <property type="entry name" value="RbsD_FucU"/>
    <property type="match status" value="1"/>
</dbReference>
<dbReference type="SUPFAM" id="SSF102546">
    <property type="entry name" value="RbsD-like"/>
    <property type="match status" value="1"/>
</dbReference>
<protein>
    <recommendedName>
        <fullName evidence="1">D-ribose pyranase</fullName>
        <ecNumber evidence="1">5.4.99.62</ecNumber>
    </recommendedName>
</protein>
<evidence type="ECO:0000255" key="1">
    <source>
        <dbReference type="HAMAP-Rule" id="MF_01661"/>
    </source>
</evidence>
<gene>
    <name evidence="1" type="primary">rbsD</name>
    <name type="ordered locus">SNSL254_A4164</name>
</gene>
<comment type="function">
    <text evidence="1">Catalyzes the interconversion of beta-pyran and beta-furan forms of D-ribose.</text>
</comment>
<comment type="catalytic activity">
    <reaction evidence="1">
        <text>beta-D-ribopyranose = beta-D-ribofuranose</text>
        <dbReference type="Rhea" id="RHEA:25432"/>
        <dbReference type="ChEBI" id="CHEBI:27476"/>
        <dbReference type="ChEBI" id="CHEBI:47002"/>
        <dbReference type="EC" id="5.4.99.62"/>
    </reaction>
</comment>
<comment type="pathway">
    <text evidence="1">Carbohydrate metabolism; D-ribose degradation; D-ribose 5-phosphate from beta-D-ribopyranose: step 1/2.</text>
</comment>
<comment type="subunit">
    <text evidence="1">Homodecamer.</text>
</comment>
<comment type="subcellular location">
    <subcellularLocation>
        <location evidence="1">Cytoplasm</location>
    </subcellularLocation>
</comment>
<comment type="similarity">
    <text evidence="1">Belongs to the RbsD / FucU family. RbsD subfamily.</text>
</comment>
<proteinExistence type="inferred from homology"/>
<name>RBSD_SALNS</name>
<sequence length="139" mass="15189">MKKGTVLNSEISSVISRLGHTDTLVVCDAGLPIPNSTARIDMALTQGVPSFMQVVDVVTREMQVEAAILATEIKQQNPQLHETLLTHLEQLQQHQGNTIKISYTTHEQFKKLTADSQAVIRSGECSPYANVILCAGVTF</sequence>
<keyword id="KW-0119">Carbohydrate metabolism</keyword>
<keyword id="KW-0963">Cytoplasm</keyword>
<keyword id="KW-0413">Isomerase</keyword>
<feature type="chain" id="PRO_1000187163" description="D-ribose pyranase">
    <location>
        <begin position="1"/>
        <end position="139"/>
    </location>
</feature>
<feature type="active site" description="Proton donor" evidence="1">
    <location>
        <position position="20"/>
    </location>
</feature>
<feature type="binding site" evidence="1">
    <location>
        <position position="28"/>
    </location>
    <ligand>
        <name>substrate</name>
    </ligand>
</feature>
<feature type="binding site" evidence="1">
    <location>
        <position position="106"/>
    </location>
    <ligand>
        <name>substrate</name>
    </ligand>
</feature>
<feature type="binding site" evidence="1">
    <location>
        <begin position="128"/>
        <end position="130"/>
    </location>
    <ligand>
        <name>substrate</name>
    </ligand>
</feature>
<organism>
    <name type="scientific">Salmonella newport (strain SL254)</name>
    <dbReference type="NCBI Taxonomy" id="423368"/>
    <lineage>
        <taxon>Bacteria</taxon>
        <taxon>Pseudomonadati</taxon>
        <taxon>Pseudomonadota</taxon>
        <taxon>Gammaproteobacteria</taxon>
        <taxon>Enterobacterales</taxon>
        <taxon>Enterobacteriaceae</taxon>
        <taxon>Salmonella</taxon>
    </lineage>
</organism>
<accession>B4SYE9</accession>